<accession>A5E771</accession>
<proteinExistence type="inferred from homology"/>
<dbReference type="EMBL" id="CH981533">
    <property type="protein sequence ID" value="EDK47279.1"/>
    <property type="molecule type" value="Genomic_DNA"/>
</dbReference>
<dbReference type="RefSeq" id="XP_001523234.1">
    <property type="nucleotide sequence ID" value="XM_001523184.1"/>
</dbReference>
<dbReference type="SMR" id="A5E771"/>
<dbReference type="FunCoup" id="A5E771">
    <property type="interactions" value="54"/>
</dbReference>
<dbReference type="STRING" id="379508.A5E771"/>
<dbReference type="GeneID" id="5230440"/>
<dbReference type="KEGG" id="lel:PVL30_005000"/>
<dbReference type="VEuPathDB" id="FungiDB:LELG_05460"/>
<dbReference type="eggNOG" id="ENOG502S3PB">
    <property type="taxonomic scope" value="Eukaryota"/>
</dbReference>
<dbReference type="HOGENOM" id="CLU_026794_2_0_1"/>
<dbReference type="InParanoid" id="A5E771"/>
<dbReference type="OMA" id="KRAHFCF"/>
<dbReference type="OrthoDB" id="3356905at2759"/>
<dbReference type="Proteomes" id="UP000001996">
    <property type="component" value="Unassembled WGS sequence"/>
</dbReference>
<dbReference type="GO" id="GO:0005789">
    <property type="term" value="C:endoplasmic reticulum membrane"/>
    <property type="evidence" value="ECO:0007669"/>
    <property type="project" value="UniProtKB-SubCell"/>
</dbReference>
<dbReference type="GO" id="GO:0032865">
    <property type="term" value="C:ERMES complex"/>
    <property type="evidence" value="ECO:0007669"/>
    <property type="project" value="UniProtKB-UniRule"/>
</dbReference>
<dbReference type="GO" id="GO:0008289">
    <property type="term" value="F:lipid binding"/>
    <property type="evidence" value="ECO:0007669"/>
    <property type="project" value="UniProtKB-KW"/>
</dbReference>
<dbReference type="GO" id="GO:0000002">
    <property type="term" value="P:mitochondrial genome maintenance"/>
    <property type="evidence" value="ECO:0007669"/>
    <property type="project" value="UniProtKB-UniRule"/>
</dbReference>
<dbReference type="GO" id="GO:1990456">
    <property type="term" value="P:mitochondrion-endoplasmic reticulum membrane tethering"/>
    <property type="evidence" value="ECO:0007669"/>
    <property type="project" value="TreeGrafter"/>
</dbReference>
<dbReference type="GO" id="GO:0015914">
    <property type="term" value="P:phospholipid transport"/>
    <property type="evidence" value="ECO:0007669"/>
    <property type="project" value="TreeGrafter"/>
</dbReference>
<dbReference type="GO" id="GO:0045040">
    <property type="term" value="P:protein insertion into mitochondrial outer membrane"/>
    <property type="evidence" value="ECO:0007669"/>
    <property type="project" value="UniProtKB-UniRule"/>
</dbReference>
<dbReference type="HAMAP" id="MF_03104">
    <property type="entry name" value="Mdm12"/>
    <property type="match status" value="1"/>
</dbReference>
<dbReference type="InterPro" id="IPR027532">
    <property type="entry name" value="Mdm12"/>
</dbReference>
<dbReference type="InterPro" id="IPR031468">
    <property type="entry name" value="SMP_LBD"/>
</dbReference>
<dbReference type="PANTHER" id="PTHR28204">
    <property type="entry name" value="MITOCHONDRIAL DISTRIBUTION AND MORPHOLOGY PROTEIN 12"/>
    <property type="match status" value="1"/>
</dbReference>
<dbReference type="PANTHER" id="PTHR28204:SF1">
    <property type="entry name" value="MITOCHONDRIAL DISTRIBUTION AND MORPHOLOGY PROTEIN 12"/>
    <property type="match status" value="1"/>
</dbReference>
<dbReference type="PROSITE" id="PS51847">
    <property type="entry name" value="SMP"/>
    <property type="match status" value="1"/>
</dbReference>
<comment type="function">
    <text evidence="1">Component of the ERMES/MDM complex, which serves as a molecular tether to connect the endoplasmic reticulum (ER) and mitochondria. Components of this complex are involved in the control of mitochondrial shape and protein biogenesis, and function in nonvesicular lipid trafficking between the ER and mitochondria. MDM12 is required for the interaction of the ER-resident membrane protein MMM1 and the outer mitochondrial membrane-resident beta-barrel protein MDM10. The MDM12-MMM1 subcomplex functions in the major beta-barrel assembly pathway that is responsible for biogenesis of all mitochondrial outer membrane beta-barrel proteins, and acts in a late step after the SAM complex. The MDM10-MDM12-MMM1 subcomplex further acts in the TOM40-specific pathway after the action of the MDM12-MMM1 complex. Essential for establishing and maintaining the structure of mitochondria and maintenance of mtDNA nucleoids.</text>
</comment>
<comment type="subunit">
    <text evidence="1">Component of the ER-mitochondria encounter structure (ERMES) or MDM complex, composed of MMM1, MDM10, MDM12 and MDM34. A MMM1 homodimer associates with one molecule of MDM12 on each side in a pairwise head-to-tail manner, and the SMP-LTD domains of MMM1 and MDM12 generate a continuous hydrophobic tunnel for phospholipid trafficking.</text>
</comment>
<comment type="subcellular location">
    <subcellularLocation>
        <location evidence="1">Mitochondrion outer membrane</location>
        <topology evidence="1">Peripheral membrane protein</topology>
        <orientation evidence="1">Cytoplasmic side</orientation>
    </subcellularLocation>
    <subcellularLocation>
        <location evidence="1">Endoplasmic reticulum membrane</location>
        <topology evidence="1">Peripheral membrane protein</topology>
        <orientation evidence="1">Cytoplasmic side</orientation>
    </subcellularLocation>
    <text evidence="1">The ERMES/MDM complex localizes to a few discrete foci (around 10 per single cell), that represent mitochondria-endoplasmic reticulum junctions. These foci are often found next to mtDNA nucleoids.</text>
</comment>
<comment type="domain">
    <text evidence="1">The SMP-LTD domain is a barrel-like domain that can bind various types of glycerophospholipids in its interior and mediate their transfer between two adjacent bilayers.</text>
</comment>
<comment type="similarity">
    <text evidence="1">Belongs to the MDM12 family.</text>
</comment>
<keyword id="KW-0256">Endoplasmic reticulum</keyword>
<keyword id="KW-0445">Lipid transport</keyword>
<keyword id="KW-0446">Lipid-binding</keyword>
<keyword id="KW-0472">Membrane</keyword>
<keyword id="KW-0496">Mitochondrion</keyword>
<keyword id="KW-1000">Mitochondrion outer membrane</keyword>
<keyword id="KW-1185">Reference proteome</keyword>
<keyword id="KW-0813">Transport</keyword>
<evidence type="ECO:0000255" key="1">
    <source>
        <dbReference type="HAMAP-Rule" id="MF_03104"/>
    </source>
</evidence>
<evidence type="ECO:0000256" key="2">
    <source>
        <dbReference type="SAM" id="MobiDB-lite"/>
    </source>
</evidence>
<gene>
    <name evidence="1" type="primary">MDM12</name>
    <name type="ORF">LELG_05460</name>
</gene>
<reference key="1">
    <citation type="journal article" date="2009" name="Nature">
        <title>Evolution of pathogenicity and sexual reproduction in eight Candida genomes.</title>
        <authorList>
            <person name="Butler G."/>
            <person name="Rasmussen M.D."/>
            <person name="Lin M.F."/>
            <person name="Santos M.A.S."/>
            <person name="Sakthikumar S."/>
            <person name="Munro C.A."/>
            <person name="Rheinbay E."/>
            <person name="Grabherr M."/>
            <person name="Forche A."/>
            <person name="Reedy J.L."/>
            <person name="Agrafioti I."/>
            <person name="Arnaud M.B."/>
            <person name="Bates S."/>
            <person name="Brown A.J.P."/>
            <person name="Brunke S."/>
            <person name="Costanzo M.C."/>
            <person name="Fitzpatrick D.A."/>
            <person name="de Groot P.W.J."/>
            <person name="Harris D."/>
            <person name="Hoyer L.L."/>
            <person name="Hube B."/>
            <person name="Klis F.M."/>
            <person name="Kodira C."/>
            <person name="Lennard N."/>
            <person name="Logue M.E."/>
            <person name="Martin R."/>
            <person name="Neiman A.M."/>
            <person name="Nikolaou E."/>
            <person name="Quail M.A."/>
            <person name="Quinn J."/>
            <person name="Santos M.C."/>
            <person name="Schmitzberger F.F."/>
            <person name="Sherlock G."/>
            <person name="Shah P."/>
            <person name="Silverstein K.A.T."/>
            <person name="Skrzypek M.S."/>
            <person name="Soll D."/>
            <person name="Staggs R."/>
            <person name="Stansfield I."/>
            <person name="Stumpf M.P.H."/>
            <person name="Sudbery P.E."/>
            <person name="Srikantha T."/>
            <person name="Zeng Q."/>
            <person name="Berman J."/>
            <person name="Berriman M."/>
            <person name="Heitman J."/>
            <person name="Gow N.A.R."/>
            <person name="Lorenz M.C."/>
            <person name="Birren B.W."/>
            <person name="Kellis M."/>
            <person name="Cuomo C.A."/>
        </authorList>
    </citation>
    <scope>NUCLEOTIDE SEQUENCE [LARGE SCALE GENOMIC DNA]</scope>
    <source>
        <strain>ATCC 11503 / BCRC 21390 / CBS 2605 / JCM 1781 / NBRC 1676 / NRRL YB-4239</strain>
    </source>
</reference>
<sequence>MSFDINWEKLTTDNQINDSIKNFLHEQFQSLQLPSYISNLEVVDFKLGTIPPEITIRHIGDPFEEFYANPDDGDGDGNNDEEVLKDKSTKLKNRQAVNIIPNKAGATHEADIINDHDYGDEDDIDDDYDNDSDDYDDDENDGLHDHGEDEENEESSQYDEDRLSNITEGLSLVELLASASTPKRTSPQRPPLISPRGEVTQQTLSKPKEPFQSILNPYGVTSVLNQGSNAAKNTTATSIAAGTTAANGVGTLKDIFDQNNFSSRVIPKIKTKEESVSGDQQQGKQTGKANEKGQKHKHEHEEEQGSDKQNAKNKASDDVQLILEINYKGNLYIDLLVTLLVNYPSPNFISLPIKLHVTDLVIHTIATIAYLKHAVYVSFLCDVNDEADGFSGASSNASTPNVTGTTSGGGNSGGNIVDYYFSDPNNKERIDIIKKIKIESEIGEVENNILRNVGKVEKFLMEQLRAILRDEIAWPSWICVDMAENDDEEEDDDDDDHDEDNEGRGRMRDTGDVDVRDHDKKED</sequence>
<feature type="chain" id="PRO_0000384291" description="Mitochondrial distribution and morphology protein 12">
    <location>
        <begin position="1"/>
        <end position="523"/>
    </location>
</feature>
<feature type="domain" description="SMP-LTD" evidence="1">
    <location>
        <begin position="1"/>
        <end position="483"/>
    </location>
</feature>
<feature type="region of interest" description="Disordered" evidence="2">
    <location>
        <begin position="108"/>
        <end position="160"/>
    </location>
</feature>
<feature type="region of interest" description="Disordered" evidence="2">
    <location>
        <begin position="178"/>
        <end position="213"/>
    </location>
</feature>
<feature type="region of interest" description="Disordered" evidence="2">
    <location>
        <begin position="270"/>
        <end position="313"/>
    </location>
</feature>
<feature type="region of interest" description="Disordered" evidence="2">
    <location>
        <begin position="483"/>
        <end position="523"/>
    </location>
</feature>
<feature type="compositionally biased region" description="Basic and acidic residues" evidence="2">
    <location>
        <begin position="108"/>
        <end position="117"/>
    </location>
</feature>
<feature type="compositionally biased region" description="Acidic residues" evidence="2">
    <location>
        <begin position="118"/>
        <end position="140"/>
    </location>
</feature>
<feature type="compositionally biased region" description="Acidic residues" evidence="2">
    <location>
        <begin position="148"/>
        <end position="158"/>
    </location>
</feature>
<feature type="compositionally biased region" description="Polar residues" evidence="2">
    <location>
        <begin position="178"/>
        <end position="187"/>
    </location>
</feature>
<feature type="compositionally biased region" description="Polar residues" evidence="2">
    <location>
        <begin position="277"/>
        <end position="288"/>
    </location>
</feature>
<feature type="compositionally biased region" description="Basic and acidic residues" evidence="2">
    <location>
        <begin position="289"/>
        <end position="313"/>
    </location>
</feature>
<feature type="compositionally biased region" description="Acidic residues" evidence="2">
    <location>
        <begin position="483"/>
        <end position="501"/>
    </location>
</feature>
<feature type="compositionally biased region" description="Basic and acidic residues" evidence="2">
    <location>
        <begin position="502"/>
        <end position="523"/>
    </location>
</feature>
<organism>
    <name type="scientific">Lodderomyces elongisporus (strain ATCC 11503 / CBS 2605 / JCM 1781 / NBRC 1676 / NRRL YB-4239)</name>
    <name type="common">Yeast</name>
    <name type="synonym">Saccharomyces elongisporus</name>
    <dbReference type="NCBI Taxonomy" id="379508"/>
    <lineage>
        <taxon>Eukaryota</taxon>
        <taxon>Fungi</taxon>
        <taxon>Dikarya</taxon>
        <taxon>Ascomycota</taxon>
        <taxon>Saccharomycotina</taxon>
        <taxon>Pichiomycetes</taxon>
        <taxon>Debaryomycetaceae</taxon>
        <taxon>Candida/Lodderomyces clade</taxon>
        <taxon>Lodderomyces</taxon>
    </lineage>
</organism>
<protein>
    <recommendedName>
        <fullName evidence="1">Mitochondrial distribution and morphology protein 12</fullName>
    </recommendedName>
    <alternativeName>
        <fullName evidence="1">Mitochondrial inheritance component MDM12</fullName>
    </alternativeName>
</protein>
<name>MDM12_LODEL</name>